<organism>
    <name type="scientific">Rhizobium johnstonii (strain DSM 114642 / LMG 32736 / 3841)</name>
    <name type="common">Rhizobium leguminosarum bv. viciae</name>
    <dbReference type="NCBI Taxonomy" id="216596"/>
    <lineage>
        <taxon>Bacteria</taxon>
        <taxon>Pseudomonadati</taxon>
        <taxon>Pseudomonadota</taxon>
        <taxon>Alphaproteobacteria</taxon>
        <taxon>Hyphomicrobiales</taxon>
        <taxon>Rhizobiaceae</taxon>
        <taxon>Rhizobium/Agrobacterium group</taxon>
        <taxon>Rhizobium</taxon>
        <taxon>Rhizobium johnstonii</taxon>
    </lineage>
</organism>
<gene>
    <name type="ordered locus">RL4195</name>
</gene>
<protein>
    <recommendedName>
        <fullName evidence="1">UPF0391 membrane protein RL4195</fullName>
    </recommendedName>
</protein>
<accession>Q1MBJ9</accession>
<evidence type="ECO:0000255" key="1">
    <source>
        <dbReference type="HAMAP-Rule" id="MF_01361"/>
    </source>
</evidence>
<evidence type="ECO:0000305" key="2"/>
<comment type="subcellular location">
    <subcellularLocation>
        <location evidence="1">Cell membrane</location>
        <topology evidence="1">Multi-pass membrane protein</topology>
    </subcellularLocation>
</comment>
<comment type="similarity">
    <text evidence="1">Belongs to the UPF0391 family.</text>
</comment>
<comment type="sequence caution" evidence="2">
    <conflict type="erroneous initiation">
        <sequence resource="EMBL-CDS" id="CAK09684"/>
    </conflict>
</comment>
<proteinExistence type="inferred from homology"/>
<keyword id="KW-1003">Cell membrane</keyword>
<keyword id="KW-0472">Membrane</keyword>
<keyword id="KW-0812">Transmembrane</keyword>
<keyword id="KW-1133">Transmembrane helix</keyword>
<name>Y4195_RHIJ3</name>
<sequence length="57" mass="6049">MLKWALIFFVISIIAGFFGFSGVSAATATIARVLFGIALVIFLIFLVLALMAGQAIL</sequence>
<feature type="chain" id="PRO_0000256769" description="UPF0391 membrane protein RL4195">
    <location>
        <begin position="1"/>
        <end position="57"/>
    </location>
</feature>
<feature type="transmembrane region" description="Helical" evidence="1">
    <location>
        <begin position="4"/>
        <end position="24"/>
    </location>
</feature>
<feature type="transmembrane region" description="Helical" evidence="1">
    <location>
        <begin position="33"/>
        <end position="53"/>
    </location>
</feature>
<reference key="1">
    <citation type="journal article" date="2006" name="Genome Biol.">
        <title>The genome of Rhizobium leguminosarum has recognizable core and accessory components.</title>
        <authorList>
            <person name="Young J.P.W."/>
            <person name="Crossman L.C."/>
            <person name="Johnston A.W.B."/>
            <person name="Thomson N.R."/>
            <person name="Ghazoui Z.F."/>
            <person name="Hull K.H."/>
            <person name="Wexler M."/>
            <person name="Curson A.R.J."/>
            <person name="Todd J.D."/>
            <person name="Poole P.S."/>
            <person name="Mauchline T.H."/>
            <person name="East A.K."/>
            <person name="Quail M.A."/>
            <person name="Churcher C."/>
            <person name="Arrowsmith C."/>
            <person name="Cherevach I."/>
            <person name="Chillingworth T."/>
            <person name="Clarke K."/>
            <person name="Cronin A."/>
            <person name="Davis P."/>
            <person name="Fraser A."/>
            <person name="Hance Z."/>
            <person name="Hauser H."/>
            <person name="Jagels K."/>
            <person name="Moule S."/>
            <person name="Mungall K."/>
            <person name="Norbertczak H."/>
            <person name="Rabbinowitsch E."/>
            <person name="Sanders M."/>
            <person name="Simmonds M."/>
            <person name="Whitehead S."/>
            <person name="Parkhill J."/>
        </authorList>
    </citation>
    <scope>NUCLEOTIDE SEQUENCE [LARGE SCALE GENOMIC DNA]</scope>
    <source>
        <strain>DSM 114642 / LMG 32736 / 3841</strain>
    </source>
</reference>
<dbReference type="EMBL" id="AM236080">
    <property type="protein sequence ID" value="CAK09684.1"/>
    <property type="status" value="ALT_INIT"/>
    <property type="molecule type" value="Genomic_DNA"/>
</dbReference>
<dbReference type="RefSeq" id="WP_003552965.1">
    <property type="nucleotide sequence ID" value="NC_008380.1"/>
</dbReference>
<dbReference type="EnsemblBacteria" id="CAK09684">
    <property type="protein sequence ID" value="CAK09684"/>
    <property type="gene ID" value="RL4195"/>
</dbReference>
<dbReference type="KEGG" id="rle:RL4195"/>
<dbReference type="eggNOG" id="COG5487">
    <property type="taxonomic scope" value="Bacteria"/>
</dbReference>
<dbReference type="HOGENOM" id="CLU_187346_1_1_5"/>
<dbReference type="Proteomes" id="UP000006575">
    <property type="component" value="Chromosome"/>
</dbReference>
<dbReference type="GO" id="GO:0005886">
    <property type="term" value="C:plasma membrane"/>
    <property type="evidence" value="ECO:0007669"/>
    <property type="project" value="UniProtKB-SubCell"/>
</dbReference>
<dbReference type="HAMAP" id="MF_01361">
    <property type="entry name" value="UPF0391"/>
    <property type="match status" value="1"/>
</dbReference>
<dbReference type="InterPro" id="IPR009760">
    <property type="entry name" value="DUF1328"/>
</dbReference>
<dbReference type="NCBIfam" id="NF010234">
    <property type="entry name" value="PRK13682.2-5"/>
    <property type="match status" value="1"/>
</dbReference>
<dbReference type="Pfam" id="PF07043">
    <property type="entry name" value="DUF1328"/>
    <property type="match status" value="1"/>
</dbReference>
<dbReference type="PIRSF" id="PIRSF036466">
    <property type="entry name" value="UCP036466"/>
    <property type="match status" value="1"/>
</dbReference>